<organism>
    <name type="scientific">Homo sapiens</name>
    <name type="common">Human</name>
    <dbReference type="NCBI Taxonomy" id="9606"/>
    <lineage>
        <taxon>Eukaryota</taxon>
        <taxon>Metazoa</taxon>
        <taxon>Chordata</taxon>
        <taxon>Craniata</taxon>
        <taxon>Vertebrata</taxon>
        <taxon>Euteleostomi</taxon>
        <taxon>Mammalia</taxon>
        <taxon>Eutheria</taxon>
        <taxon>Euarchontoglires</taxon>
        <taxon>Primates</taxon>
        <taxon>Haplorrhini</taxon>
        <taxon>Catarrhini</taxon>
        <taxon>Hominidae</taxon>
        <taxon>Homo</taxon>
    </lineage>
</organism>
<evidence type="ECO:0000250" key="1"/>
<evidence type="ECO:0000255" key="2">
    <source>
        <dbReference type="PROSITE-ProRule" id="PRU01234"/>
    </source>
</evidence>
<evidence type="ECO:0000269" key="3">
    <source>
    </source>
</evidence>
<evidence type="ECO:0000269" key="4">
    <source>
    </source>
</evidence>
<evidence type="ECO:0000303" key="5">
    <source>
    </source>
</evidence>
<evidence type="ECO:0000305" key="6"/>
<sequence>MAVTTRLTWLHEKILQNHFGGKRLSLLYKGSVHGFRNGVLLDRCCNQGPTLTVIYSEDHIIGAYAEESYQEGKYASIILFALQDTKISEWKLGLCTPETLFCCDVTKYNSPTNFQIDGRNRKVIMDLKTMENLGLAQNCTISIQDYEVFRCEDSLDERKIKGVIELRKSLLSALRTYEPYGSLVQQIRILLLGPIGAGKSSFFNSVRSVFQGHVTHQALVGTNTTGISEKYRTYSIRDGKDGKYLPFILCDSLGLSEKEGGLCRDDIFYILNGNIRDRYQFNPMESIKLNHHDYIDSPSLKDRIHCVAFVFDASSIQYFSSQMIVKIKRIRRELVNAGVVHVALLTHVDSMDLITKGDLIEIERCEPVRSKLEEVQRKLGFALSDISVVSNYSSEWELDPVKDVLILSALRRMLWAADDFLEDLPFEQIGNLREEIINCAQGKK</sequence>
<accession>Q8TCB0</accession>
<accession>B7ZAG3</accession>
<accession>D3DQ80</accession>
<accession>Q14496</accession>
<reference key="1">
    <citation type="journal article" date="1994" name="Eur. J. Biochem.">
        <title>Induction of the human gene for p44, a hepatitis-C-associated microtubular aggregate protein, by interferon-alpha/beta.</title>
        <authorList>
            <person name="Kitamura A."/>
            <person name="Takahashi K."/>
            <person name="Okajima A."/>
            <person name="Kitamura N."/>
        </authorList>
    </citation>
    <scope>NUCLEOTIDE SEQUENCE [GENOMIC DNA / MRNA] (ISOFORM 1)</scope>
    <scope>INDUCTION</scope>
</reference>
<reference key="2">
    <citation type="journal article" date="2004" name="Nat. Genet.">
        <title>Complete sequencing and characterization of 21,243 full-length human cDNAs.</title>
        <authorList>
            <person name="Ota T."/>
            <person name="Suzuki Y."/>
            <person name="Nishikawa T."/>
            <person name="Otsuki T."/>
            <person name="Sugiyama T."/>
            <person name="Irie R."/>
            <person name="Wakamatsu A."/>
            <person name="Hayashi K."/>
            <person name="Sato H."/>
            <person name="Nagai K."/>
            <person name="Kimura K."/>
            <person name="Makita H."/>
            <person name="Sekine M."/>
            <person name="Obayashi M."/>
            <person name="Nishi T."/>
            <person name="Shibahara T."/>
            <person name="Tanaka T."/>
            <person name="Ishii S."/>
            <person name="Yamamoto J."/>
            <person name="Saito K."/>
            <person name="Kawai Y."/>
            <person name="Isono Y."/>
            <person name="Nakamura Y."/>
            <person name="Nagahari K."/>
            <person name="Murakami K."/>
            <person name="Yasuda T."/>
            <person name="Iwayanagi T."/>
            <person name="Wagatsuma M."/>
            <person name="Shiratori A."/>
            <person name="Sudo H."/>
            <person name="Hosoiri T."/>
            <person name="Kaku Y."/>
            <person name="Kodaira H."/>
            <person name="Kondo H."/>
            <person name="Sugawara M."/>
            <person name="Takahashi M."/>
            <person name="Kanda K."/>
            <person name="Yokoi T."/>
            <person name="Furuya T."/>
            <person name="Kikkawa E."/>
            <person name="Omura Y."/>
            <person name="Abe K."/>
            <person name="Kamihara K."/>
            <person name="Katsuta N."/>
            <person name="Sato K."/>
            <person name="Tanikawa M."/>
            <person name="Yamazaki M."/>
            <person name="Ninomiya K."/>
            <person name="Ishibashi T."/>
            <person name="Yamashita H."/>
            <person name="Murakawa K."/>
            <person name="Fujimori K."/>
            <person name="Tanai H."/>
            <person name="Kimata M."/>
            <person name="Watanabe M."/>
            <person name="Hiraoka S."/>
            <person name="Chiba Y."/>
            <person name="Ishida S."/>
            <person name="Ono Y."/>
            <person name="Takiguchi S."/>
            <person name="Watanabe S."/>
            <person name="Yosida M."/>
            <person name="Hotuta T."/>
            <person name="Kusano J."/>
            <person name="Kanehori K."/>
            <person name="Takahashi-Fujii A."/>
            <person name="Hara H."/>
            <person name="Tanase T.-O."/>
            <person name="Nomura Y."/>
            <person name="Togiya S."/>
            <person name="Komai F."/>
            <person name="Hara R."/>
            <person name="Takeuchi K."/>
            <person name="Arita M."/>
            <person name="Imose N."/>
            <person name="Musashino K."/>
            <person name="Yuuki H."/>
            <person name="Oshima A."/>
            <person name="Sasaki N."/>
            <person name="Aotsuka S."/>
            <person name="Yoshikawa Y."/>
            <person name="Matsunawa H."/>
            <person name="Ichihara T."/>
            <person name="Shiohata N."/>
            <person name="Sano S."/>
            <person name="Moriya S."/>
            <person name="Momiyama H."/>
            <person name="Satoh N."/>
            <person name="Takami S."/>
            <person name="Terashima Y."/>
            <person name="Suzuki O."/>
            <person name="Nakagawa S."/>
            <person name="Senoh A."/>
            <person name="Mizoguchi H."/>
            <person name="Goto Y."/>
            <person name="Shimizu F."/>
            <person name="Wakebe H."/>
            <person name="Hishigaki H."/>
            <person name="Watanabe T."/>
            <person name="Sugiyama A."/>
            <person name="Takemoto M."/>
            <person name="Kawakami B."/>
            <person name="Yamazaki M."/>
            <person name="Watanabe K."/>
            <person name="Kumagai A."/>
            <person name="Itakura S."/>
            <person name="Fukuzumi Y."/>
            <person name="Fujimori Y."/>
            <person name="Komiyama M."/>
            <person name="Tashiro H."/>
            <person name="Tanigami A."/>
            <person name="Fujiwara T."/>
            <person name="Ono T."/>
            <person name="Yamada K."/>
            <person name="Fujii Y."/>
            <person name="Ozaki K."/>
            <person name="Hirao M."/>
            <person name="Ohmori Y."/>
            <person name="Kawabata A."/>
            <person name="Hikiji T."/>
            <person name="Kobatake N."/>
            <person name="Inagaki H."/>
            <person name="Ikema Y."/>
            <person name="Okamoto S."/>
            <person name="Okitani R."/>
            <person name="Kawakami T."/>
            <person name="Noguchi S."/>
            <person name="Itoh T."/>
            <person name="Shigeta K."/>
            <person name="Senba T."/>
            <person name="Matsumura K."/>
            <person name="Nakajima Y."/>
            <person name="Mizuno T."/>
            <person name="Morinaga M."/>
            <person name="Sasaki M."/>
            <person name="Togashi T."/>
            <person name="Oyama M."/>
            <person name="Hata H."/>
            <person name="Watanabe M."/>
            <person name="Komatsu T."/>
            <person name="Mizushima-Sugano J."/>
            <person name="Satoh T."/>
            <person name="Shirai Y."/>
            <person name="Takahashi Y."/>
            <person name="Nakagawa K."/>
            <person name="Okumura K."/>
            <person name="Nagase T."/>
            <person name="Nomura N."/>
            <person name="Kikuchi H."/>
            <person name="Masuho Y."/>
            <person name="Yamashita R."/>
            <person name="Nakai K."/>
            <person name="Yada T."/>
            <person name="Nakamura Y."/>
            <person name="Ohara O."/>
            <person name="Isogai T."/>
            <person name="Sugano S."/>
        </authorList>
    </citation>
    <scope>NUCLEOTIDE SEQUENCE [LARGE SCALE MRNA] (ISOFORM 2)</scope>
    <source>
        <tissue>Brain</tissue>
    </source>
</reference>
<reference key="3">
    <citation type="journal article" date="2006" name="Nature">
        <title>The DNA sequence and biological annotation of human chromosome 1.</title>
        <authorList>
            <person name="Gregory S.G."/>
            <person name="Barlow K.F."/>
            <person name="McLay K.E."/>
            <person name="Kaul R."/>
            <person name="Swarbreck D."/>
            <person name="Dunham A."/>
            <person name="Scott C.E."/>
            <person name="Howe K.L."/>
            <person name="Woodfine K."/>
            <person name="Spencer C.C.A."/>
            <person name="Jones M.C."/>
            <person name="Gillson C."/>
            <person name="Searle S."/>
            <person name="Zhou Y."/>
            <person name="Kokocinski F."/>
            <person name="McDonald L."/>
            <person name="Evans R."/>
            <person name="Phillips K."/>
            <person name="Atkinson A."/>
            <person name="Cooper R."/>
            <person name="Jones C."/>
            <person name="Hall R.E."/>
            <person name="Andrews T.D."/>
            <person name="Lloyd C."/>
            <person name="Ainscough R."/>
            <person name="Almeida J.P."/>
            <person name="Ambrose K.D."/>
            <person name="Anderson F."/>
            <person name="Andrew R.W."/>
            <person name="Ashwell R.I.S."/>
            <person name="Aubin K."/>
            <person name="Babbage A.K."/>
            <person name="Bagguley C.L."/>
            <person name="Bailey J."/>
            <person name="Beasley H."/>
            <person name="Bethel G."/>
            <person name="Bird C.P."/>
            <person name="Bray-Allen S."/>
            <person name="Brown J.Y."/>
            <person name="Brown A.J."/>
            <person name="Buckley D."/>
            <person name="Burton J."/>
            <person name="Bye J."/>
            <person name="Carder C."/>
            <person name="Chapman J.C."/>
            <person name="Clark S.Y."/>
            <person name="Clarke G."/>
            <person name="Clee C."/>
            <person name="Cobley V."/>
            <person name="Collier R.E."/>
            <person name="Corby N."/>
            <person name="Coville G.J."/>
            <person name="Davies J."/>
            <person name="Deadman R."/>
            <person name="Dunn M."/>
            <person name="Earthrowl M."/>
            <person name="Ellington A.G."/>
            <person name="Errington H."/>
            <person name="Frankish A."/>
            <person name="Frankland J."/>
            <person name="French L."/>
            <person name="Garner P."/>
            <person name="Garnett J."/>
            <person name="Gay L."/>
            <person name="Ghori M.R.J."/>
            <person name="Gibson R."/>
            <person name="Gilby L.M."/>
            <person name="Gillett W."/>
            <person name="Glithero R.J."/>
            <person name="Grafham D.V."/>
            <person name="Griffiths C."/>
            <person name="Griffiths-Jones S."/>
            <person name="Grocock R."/>
            <person name="Hammond S."/>
            <person name="Harrison E.S.I."/>
            <person name="Hart E."/>
            <person name="Haugen E."/>
            <person name="Heath P.D."/>
            <person name="Holmes S."/>
            <person name="Holt K."/>
            <person name="Howden P.J."/>
            <person name="Hunt A.R."/>
            <person name="Hunt S.E."/>
            <person name="Hunter G."/>
            <person name="Isherwood J."/>
            <person name="James R."/>
            <person name="Johnson C."/>
            <person name="Johnson D."/>
            <person name="Joy A."/>
            <person name="Kay M."/>
            <person name="Kershaw J.K."/>
            <person name="Kibukawa M."/>
            <person name="Kimberley A.M."/>
            <person name="King A."/>
            <person name="Knights A.J."/>
            <person name="Lad H."/>
            <person name="Laird G."/>
            <person name="Lawlor S."/>
            <person name="Leongamornlert D.A."/>
            <person name="Lloyd D.M."/>
            <person name="Loveland J."/>
            <person name="Lovell J."/>
            <person name="Lush M.J."/>
            <person name="Lyne R."/>
            <person name="Martin S."/>
            <person name="Mashreghi-Mohammadi M."/>
            <person name="Matthews L."/>
            <person name="Matthews N.S.W."/>
            <person name="McLaren S."/>
            <person name="Milne S."/>
            <person name="Mistry S."/>
            <person name="Moore M.J.F."/>
            <person name="Nickerson T."/>
            <person name="O'Dell C.N."/>
            <person name="Oliver K."/>
            <person name="Palmeiri A."/>
            <person name="Palmer S.A."/>
            <person name="Parker A."/>
            <person name="Patel D."/>
            <person name="Pearce A.V."/>
            <person name="Peck A.I."/>
            <person name="Pelan S."/>
            <person name="Phelps K."/>
            <person name="Phillimore B.J."/>
            <person name="Plumb R."/>
            <person name="Rajan J."/>
            <person name="Raymond C."/>
            <person name="Rouse G."/>
            <person name="Saenphimmachak C."/>
            <person name="Sehra H.K."/>
            <person name="Sheridan E."/>
            <person name="Shownkeen R."/>
            <person name="Sims S."/>
            <person name="Skuce C.D."/>
            <person name="Smith M."/>
            <person name="Steward C."/>
            <person name="Subramanian S."/>
            <person name="Sycamore N."/>
            <person name="Tracey A."/>
            <person name="Tromans A."/>
            <person name="Van Helmond Z."/>
            <person name="Wall M."/>
            <person name="Wallis J.M."/>
            <person name="White S."/>
            <person name="Whitehead S.L."/>
            <person name="Wilkinson J.E."/>
            <person name="Willey D.L."/>
            <person name="Williams H."/>
            <person name="Wilming L."/>
            <person name="Wray P.W."/>
            <person name="Wu Z."/>
            <person name="Coulson A."/>
            <person name="Vaudin M."/>
            <person name="Sulston J.E."/>
            <person name="Durbin R.M."/>
            <person name="Hubbard T."/>
            <person name="Wooster R."/>
            <person name="Dunham I."/>
            <person name="Carter N.P."/>
            <person name="McVean G."/>
            <person name="Ross M.T."/>
            <person name="Harrow J."/>
            <person name="Olson M.V."/>
            <person name="Beck S."/>
            <person name="Rogers J."/>
            <person name="Bentley D.R."/>
        </authorList>
    </citation>
    <scope>NUCLEOTIDE SEQUENCE [LARGE SCALE GENOMIC DNA]</scope>
</reference>
<reference key="4">
    <citation type="submission" date="2005-09" db="EMBL/GenBank/DDBJ databases">
        <authorList>
            <person name="Mural R.J."/>
            <person name="Istrail S."/>
            <person name="Sutton G.G."/>
            <person name="Florea L."/>
            <person name="Halpern A.L."/>
            <person name="Mobarry C.M."/>
            <person name="Lippert R."/>
            <person name="Walenz B."/>
            <person name="Shatkay H."/>
            <person name="Dew I."/>
            <person name="Miller J.R."/>
            <person name="Flanigan M.J."/>
            <person name="Edwards N.J."/>
            <person name="Bolanos R."/>
            <person name="Fasulo D."/>
            <person name="Halldorsson B.V."/>
            <person name="Hannenhalli S."/>
            <person name="Turner R."/>
            <person name="Yooseph S."/>
            <person name="Lu F."/>
            <person name="Nusskern D.R."/>
            <person name="Shue B.C."/>
            <person name="Zheng X.H."/>
            <person name="Zhong F."/>
            <person name="Delcher A.L."/>
            <person name="Huson D.H."/>
            <person name="Kravitz S.A."/>
            <person name="Mouchard L."/>
            <person name="Reinert K."/>
            <person name="Remington K.A."/>
            <person name="Clark A.G."/>
            <person name="Waterman M.S."/>
            <person name="Eichler E.E."/>
            <person name="Adams M.D."/>
            <person name="Hunkapiller M.W."/>
            <person name="Myers E.W."/>
            <person name="Venter J.C."/>
        </authorList>
    </citation>
    <scope>NUCLEOTIDE SEQUENCE [LARGE SCALE GENOMIC DNA]</scope>
</reference>
<reference key="5">
    <citation type="journal article" date="2004" name="Genome Res.">
        <title>The status, quality, and expansion of the NIH full-length cDNA project: the Mammalian Gene Collection (MGC).</title>
        <authorList>
            <consortium name="The MGC Project Team"/>
        </authorList>
    </citation>
    <scope>NUCLEOTIDE SEQUENCE [LARGE SCALE MRNA] (ISOFORM 1)</scope>
    <scope>VARIANT ARG-9</scope>
    <source>
        <tissue>Lung</tissue>
    </source>
</reference>
<feature type="chain" id="PRO_0000084165" description="Interferon-induced protein 44">
    <location>
        <begin position="1"/>
        <end position="444"/>
    </location>
</feature>
<feature type="domain" description="TLDc" evidence="2">
    <location>
        <begin position="1"/>
        <end position="152"/>
    </location>
</feature>
<feature type="splice variant" id="VSP_057031" description="In isoform 2." evidence="5">
    <location>
        <begin position="1"/>
        <end position="283"/>
    </location>
</feature>
<feature type="splice variant" id="VSP_057032" description="In isoform 2." evidence="5">
    <original>LEEVQRKLGFALSDISVVSNYSSEWELDPVKDVLILSALRRMLWAADDFLEDLPFEQIGNLREEIINCAQGK</original>
    <variation>VMNDALRKHIFWGMLLQSHTSVYKNKNKQLLGLRRITKLL</variation>
    <location>
        <begin position="372"/>
        <end position="443"/>
    </location>
</feature>
<feature type="sequence variant" id="VAR_054647" description="In dbSNP:rs2070123." evidence="3">
    <original>W</original>
    <variation>R</variation>
    <location>
        <position position="9"/>
    </location>
</feature>
<feature type="sequence conflict" description="In Ref. 1; BAA06043." evidence="6" ref="1">
    <original>G</original>
    <variation>P</variation>
    <location>
        <position position="198"/>
    </location>
</feature>
<feature type="sequence conflict" description="In Ref. 1; BAA06043." evidence="6" ref="1">
    <original>R</original>
    <variation>Q</variation>
    <location>
        <position position="331"/>
    </location>
</feature>
<proteinExistence type="evidence at protein level"/>
<gene>
    <name type="primary">IFI44</name>
    <name type="synonym">MTAP44</name>
</gene>
<comment type="function">
    <text evidence="1">This protein aggregates to form microtubular structures.</text>
</comment>
<comment type="interaction">
    <interactant intactId="EBI-2831730">
        <id>Q8TCB0</id>
    </interactant>
    <interactant intactId="EBI-739552">
        <id>P43364</id>
        <label>MAGEA11</label>
    </interactant>
    <organismsDiffer>false</organismsDiffer>
    <experiments>3</experiments>
</comment>
<comment type="subcellular location">
    <subcellularLocation>
        <location evidence="6">Cytoplasm</location>
    </subcellularLocation>
</comment>
<comment type="alternative products">
    <event type="alternative splicing"/>
    <isoform>
        <id>Q8TCB0-1</id>
        <name>1</name>
        <sequence type="displayed"/>
    </isoform>
    <isoform>
        <id>Q8TCB0-2</id>
        <name>2</name>
        <sequence type="described" ref="VSP_057031 VSP_057032"/>
    </isoform>
</comment>
<comment type="induction">
    <text evidence="4">By alpha and beta interferons, but not by gamma interferons.</text>
</comment>
<comment type="similarity">
    <text evidence="6">Belongs to the IFI44 family.</text>
</comment>
<protein>
    <recommendedName>
        <fullName>Interferon-induced protein 44</fullName>
        <shortName>p44</shortName>
    </recommendedName>
    <alternativeName>
        <fullName>Microtubule-associated protein 44</fullName>
    </alternativeName>
</protein>
<name>IFI44_HUMAN</name>
<keyword id="KW-0025">Alternative splicing</keyword>
<keyword id="KW-0963">Cytoplasm</keyword>
<keyword id="KW-1267">Proteomics identification</keyword>
<keyword id="KW-1185">Reference proteome</keyword>
<dbReference type="EMBL" id="D28915">
    <property type="protein sequence ID" value="BAA06043.1"/>
    <property type="molecule type" value="Genomic_DNA"/>
</dbReference>
<dbReference type="EMBL" id="AK316278">
    <property type="protein sequence ID" value="BAH14649.1"/>
    <property type="molecule type" value="mRNA"/>
</dbReference>
<dbReference type="EMBL" id="AC104837">
    <property type="status" value="NOT_ANNOTATED_CDS"/>
    <property type="molecule type" value="Genomic_DNA"/>
</dbReference>
<dbReference type="EMBL" id="CH471059">
    <property type="protein sequence ID" value="EAX06347.1"/>
    <property type="molecule type" value="Genomic_DNA"/>
</dbReference>
<dbReference type="EMBL" id="CH471059">
    <property type="protein sequence ID" value="EAX06348.1"/>
    <property type="molecule type" value="Genomic_DNA"/>
</dbReference>
<dbReference type="EMBL" id="BC022870">
    <property type="protein sequence ID" value="AAH22870.1"/>
    <property type="molecule type" value="mRNA"/>
</dbReference>
<dbReference type="CCDS" id="CCDS688.1">
    <molecule id="Q8TCB0-1"/>
</dbReference>
<dbReference type="RefSeq" id="NP_006408.3">
    <molecule id="Q8TCB0-1"/>
    <property type="nucleotide sequence ID" value="NM_006417.4"/>
</dbReference>
<dbReference type="BioGRID" id="115812">
    <property type="interactions" value="4"/>
</dbReference>
<dbReference type="FunCoup" id="Q8TCB0">
    <property type="interactions" value="22"/>
</dbReference>
<dbReference type="IntAct" id="Q8TCB0">
    <property type="interactions" value="5"/>
</dbReference>
<dbReference type="STRING" id="9606.ENSP00000359783"/>
<dbReference type="iPTMnet" id="Q8TCB0"/>
<dbReference type="PhosphoSitePlus" id="Q8TCB0"/>
<dbReference type="BioMuta" id="IFI44"/>
<dbReference type="DMDM" id="224471836"/>
<dbReference type="jPOST" id="Q8TCB0"/>
<dbReference type="MassIVE" id="Q8TCB0"/>
<dbReference type="PaxDb" id="9606-ENSP00000359783"/>
<dbReference type="PeptideAtlas" id="Q8TCB0"/>
<dbReference type="ProteomicsDB" id="7066"/>
<dbReference type="ProteomicsDB" id="74109">
    <molecule id="Q8TCB0-1"/>
</dbReference>
<dbReference type="Pumba" id="Q8TCB0"/>
<dbReference type="Antibodypedia" id="19746">
    <property type="antibodies" value="150 antibodies from 24 providers"/>
</dbReference>
<dbReference type="DNASU" id="10561"/>
<dbReference type="Ensembl" id="ENST00000370747.9">
    <molecule id="Q8TCB0-1"/>
    <property type="protein sequence ID" value="ENSP00000359783.4"/>
    <property type="gene ID" value="ENSG00000137965.11"/>
</dbReference>
<dbReference type="GeneID" id="10561"/>
<dbReference type="KEGG" id="hsa:10561"/>
<dbReference type="MANE-Select" id="ENST00000370747.9">
    <property type="protein sequence ID" value="ENSP00000359783.4"/>
    <property type="RefSeq nucleotide sequence ID" value="NM_006417.5"/>
    <property type="RefSeq protein sequence ID" value="NP_006408.3"/>
</dbReference>
<dbReference type="UCSC" id="uc001dip.5">
    <molecule id="Q8TCB0-1"/>
    <property type="organism name" value="human"/>
</dbReference>
<dbReference type="AGR" id="HGNC:16938"/>
<dbReference type="CTD" id="10561"/>
<dbReference type="DisGeNET" id="10561"/>
<dbReference type="GeneCards" id="IFI44"/>
<dbReference type="HGNC" id="HGNC:16938">
    <property type="gene designation" value="IFI44"/>
</dbReference>
<dbReference type="HPA" id="ENSG00000137965">
    <property type="expression patterns" value="Tissue enhanced (bone)"/>
</dbReference>
<dbReference type="MIM" id="610468">
    <property type="type" value="gene"/>
</dbReference>
<dbReference type="neXtProt" id="NX_Q8TCB0"/>
<dbReference type="OpenTargets" id="ENSG00000137965"/>
<dbReference type="PharmGKB" id="PA29647"/>
<dbReference type="VEuPathDB" id="HostDB:ENSG00000137965"/>
<dbReference type="eggNOG" id="ENOG502QQ57">
    <property type="taxonomic scope" value="Eukaryota"/>
</dbReference>
<dbReference type="GeneTree" id="ENSGT00940000162964"/>
<dbReference type="HOGENOM" id="CLU_049888_3_1_1"/>
<dbReference type="InParanoid" id="Q8TCB0"/>
<dbReference type="OMA" id="NSMKPIT"/>
<dbReference type="OrthoDB" id="25620at2759"/>
<dbReference type="PAN-GO" id="Q8TCB0">
    <property type="GO annotations" value="1 GO annotation based on evolutionary models"/>
</dbReference>
<dbReference type="PhylomeDB" id="Q8TCB0"/>
<dbReference type="TreeFam" id="TF328728"/>
<dbReference type="PathwayCommons" id="Q8TCB0"/>
<dbReference type="Reactome" id="R-HSA-9909505">
    <molecule id="Q8TCB0-1"/>
    <property type="pathway name" value="Modulation of host responses by IFN-stimulated genes"/>
</dbReference>
<dbReference type="SignaLink" id="Q8TCB0"/>
<dbReference type="BioGRID-ORCS" id="10561">
    <property type="hits" value="8 hits in 1150 CRISPR screens"/>
</dbReference>
<dbReference type="GenomeRNAi" id="10561"/>
<dbReference type="Pharos" id="Q8TCB0">
    <property type="development level" value="Tbio"/>
</dbReference>
<dbReference type="PRO" id="PR:Q8TCB0"/>
<dbReference type="Proteomes" id="UP000005640">
    <property type="component" value="Chromosome 1"/>
</dbReference>
<dbReference type="RNAct" id="Q8TCB0">
    <property type="molecule type" value="protein"/>
</dbReference>
<dbReference type="Bgee" id="ENSG00000137965">
    <property type="expression patterns" value="Expressed in monocyte and 178 other cell types or tissues"/>
</dbReference>
<dbReference type="ExpressionAtlas" id="Q8TCB0">
    <property type="expression patterns" value="baseline and differential"/>
</dbReference>
<dbReference type="GO" id="GO:0005829">
    <property type="term" value="C:cytosol"/>
    <property type="evidence" value="ECO:0000304"/>
    <property type="project" value="Reactome"/>
</dbReference>
<dbReference type="GO" id="GO:0098586">
    <property type="term" value="P:cellular response to virus"/>
    <property type="evidence" value="ECO:0007669"/>
    <property type="project" value="Ensembl"/>
</dbReference>
<dbReference type="GO" id="GO:0006955">
    <property type="term" value="P:immune response"/>
    <property type="evidence" value="ECO:0000318"/>
    <property type="project" value="GO_Central"/>
</dbReference>
<dbReference type="GO" id="GO:0009617">
    <property type="term" value="P:response to bacterium"/>
    <property type="evidence" value="ECO:0007669"/>
    <property type="project" value="Ensembl"/>
</dbReference>
<dbReference type="GO" id="GO:0009615">
    <property type="term" value="P:response to virus"/>
    <property type="evidence" value="ECO:0000304"/>
    <property type="project" value="ProtInc"/>
</dbReference>
<dbReference type="FunFam" id="3.40.50.300:FF:001535">
    <property type="entry name" value="Interferon induced protein 44"/>
    <property type="match status" value="1"/>
</dbReference>
<dbReference type="Gene3D" id="3.40.50.300">
    <property type="entry name" value="P-loop containing nucleotide triphosphate hydrolases"/>
    <property type="match status" value="1"/>
</dbReference>
<dbReference type="InterPro" id="IPR027417">
    <property type="entry name" value="P-loop_NTPase"/>
</dbReference>
<dbReference type="InterPro" id="IPR006571">
    <property type="entry name" value="TLDc_dom"/>
</dbReference>
<dbReference type="PANTHER" id="PTHR14241">
    <property type="entry name" value="INTERFERON-INDUCED PROTEIN 44"/>
    <property type="match status" value="1"/>
</dbReference>
<dbReference type="PANTHER" id="PTHR14241:SF3">
    <property type="entry name" value="INTERFERON-INDUCED PROTEIN 44"/>
    <property type="match status" value="1"/>
</dbReference>
<dbReference type="SUPFAM" id="SSF52540">
    <property type="entry name" value="P-loop containing nucleoside triphosphate hydrolases"/>
    <property type="match status" value="1"/>
</dbReference>
<dbReference type="PROSITE" id="PS51886">
    <property type="entry name" value="TLDC"/>
    <property type="match status" value="1"/>
</dbReference>